<organism>
    <name type="scientific">Nitrobacter winogradskyi (strain ATCC 25391 / DSM 10237 / CIP 104748 / NCIMB 11846 / Nb-255)</name>
    <dbReference type="NCBI Taxonomy" id="323098"/>
    <lineage>
        <taxon>Bacteria</taxon>
        <taxon>Pseudomonadati</taxon>
        <taxon>Pseudomonadota</taxon>
        <taxon>Alphaproteobacteria</taxon>
        <taxon>Hyphomicrobiales</taxon>
        <taxon>Nitrobacteraceae</taxon>
        <taxon>Nitrobacter</taxon>
    </lineage>
</organism>
<keyword id="KW-0963">Cytoplasm</keyword>
<keyword id="KW-1185">Reference proteome</keyword>
<keyword id="KW-0694">RNA-binding</keyword>
<feature type="chain" id="PRO_1000002094" description="SsrA-binding protein">
    <location>
        <begin position="1"/>
        <end position="157"/>
    </location>
</feature>
<feature type="region of interest" description="Disordered" evidence="2">
    <location>
        <begin position="133"/>
        <end position="157"/>
    </location>
</feature>
<feature type="compositionally biased region" description="Basic and acidic residues" evidence="2">
    <location>
        <begin position="135"/>
        <end position="151"/>
    </location>
</feature>
<protein>
    <recommendedName>
        <fullName evidence="1">SsrA-binding protein</fullName>
    </recommendedName>
    <alternativeName>
        <fullName evidence="1">Small protein B</fullName>
    </alternativeName>
</protein>
<name>SSRP_NITWN</name>
<proteinExistence type="inferred from homology"/>
<accession>Q3SRA4</accession>
<comment type="function">
    <text evidence="1">Required for rescue of stalled ribosomes mediated by trans-translation. Binds to transfer-messenger RNA (tmRNA), required for stable association of tmRNA with ribosomes. tmRNA and SmpB together mimic tRNA shape, replacing the anticodon stem-loop with SmpB. tmRNA is encoded by the ssrA gene; the 2 termini fold to resemble tRNA(Ala) and it encodes a 'tag peptide', a short internal open reading frame. During trans-translation Ala-aminoacylated tmRNA acts like a tRNA, entering the A-site of stalled ribosomes, displacing the stalled mRNA. The ribosome then switches to translate the ORF on the tmRNA; the nascent peptide is terminated with the 'tag peptide' encoded by the tmRNA and targeted for degradation. The ribosome is freed to recommence translation, which seems to be the essential function of trans-translation.</text>
</comment>
<comment type="subcellular location">
    <subcellularLocation>
        <location evidence="1">Cytoplasm</location>
    </subcellularLocation>
    <text evidence="1">The tmRNA-SmpB complex associates with stalled 70S ribosomes.</text>
</comment>
<comment type="similarity">
    <text evidence="1">Belongs to the SmpB family.</text>
</comment>
<sequence length="157" mass="18008">MADKGERAIKVVAENRKARFNYAIEDTVEAGIALTGTEVKSIRNGKTTIAESYADSKNGEIWLINSNIPEYLQANRFNHEPKRPRKLLLHRKQINKLMGAVDREGMTLIPLKLYFNERGRAKLLLAIAKGKKLHDKRESEKKRDWGREKGRLLRARG</sequence>
<gene>
    <name evidence="1" type="primary">smpB</name>
    <name type="ordered locus">Nwi_1927</name>
</gene>
<evidence type="ECO:0000255" key="1">
    <source>
        <dbReference type="HAMAP-Rule" id="MF_00023"/>
    </source>
</evidence>
<evidence type="ECO:0000256" key="2">
    <source>
        <dbReference type="SAM" id="MobiDB-lite"/>
    </source>
</evidence>
<reference key="1">
    <citation type="journal article" date="2006" name="Appl. Environ. Microbiol.">
        <title>Genome sequence of the chemolithoautotrophic nitrite-oxidizing bacterium Nitrobacter winogradskyi Nb-255.</title>
        <authorList>
            <person name="Starkenburg S.R."/>
            <person name="Chain P.S.G."/>
            <person name="Sayavedra-Soto L.A."/>
            <person name="Hauser L."/>
            <person name="Land M.L."/>
            <person name="Larimer F.W."/>
            <person name="Malfatti S.A."/>
            <person name="Klotz M.G."/>
            <person name="Bottomley P.J."/>
            <person name="Arp D.J."/>
            <person name="Hickey W.J."/>
        </authorList>
    </citation>
    <scope>NUCLEOTIDE SEQUENCE [LARGE SCALE GENOMIC DNA]</scope>
    <source>
        <strain>ATCC 25391 / DSM 10237 / CIP 104748 / NCIMB 11846 / Nb-255</strain>
    </source>
</reference>
<dbReference type="EMBL" id="CP000115">
    <property type="protein sequence ID" value="ABA05187.1"/>
    <property type="molecule type" value="Genomic_DNA"/>
</dbReference>
<dbReference type="RefSeq" id="WP_011315183.1">
    <property type="nucleotide sequence ID" value="NC_007406.1"/>
</dbReference>
<dbReference type="SMR" id="Q3SRA4"/>
<dbReference type="STRING" id="323098.Nwi_1927"/>
<dbReference type="KEGG" id="nwi:Nwi_1927"/>
<dbReference type="eggNOG" id="COG0691">
    <property type="taxonomic scope" value="Bacteria"/>
</dbReference>
<dbReference type="HOGENOM" id="CLU_108953_0_1_5"/>
<dbReference type="OrthoDB" id="9805462at2"/>
<dbReference type="Proteomes" id="UP000002531">
    <property type="component" value="Chromosome"/>
</dbReference>
<dbReference type="GO" id="GO:0005829">
    <property type="term" value="C:cytosol"/>
    <property type="evidence" value="ECO:0007669"/>
    <property type="project" value="TreeGrafter"/>
</dbReference>
<dbReference type="GO" id="GO:0003723">
    <property type="term" value="F:RNA binding"/>
    <property type="evidence" value="ECO:0007669"/>
    <property type="project" value="UniProtKB-UniRule"/>
</dbReference>
<dbReference type="GO" id="GO:0070929">
    <property type="term" value="P:trans-translation"/>
    <property type="evidence" value="ECO:0007669"/>
    <property type="project" value="UniProtKB-UniRule"/>
</dbReference>
<dbReference type="CDD" id="cd09294">
    <property type="entry name" value="SmpB"/>
    <property type="match status" value="1"/>
</dbReference>
<dbReference type="Gene3D" id="2.40.280.10">
    <property type="match status" value="1"/>
</dbReference>
<dbReference type="HAMAP" id="MF_00023">
    <property type="entry name" value="SmpB"/>
    <property type="match status" value="1"/>
</dbReference>
<dbReference type="InterPro" id="IPR023620">
    <property type="entry name" value="SmpB"/>
</dbReference>
<dbReference type="InterPro" id="IPR000037">
    <property type="entry name" value="SsrA-bd_prot"/>
</dbReference>
<dbReference type="InterPro" id="IPR020081">
    <property type="entry name" value="SsrA-bd_prot_CS"/>
</dbReference>
<dbReference type="NCBIfam" id="NF003843">
    <property type="entry name" value="PRK05422.1"/>
    <property type="match status" value="1"/>
</dbReference>
<dbReference type="NCBIfam" id="TIGR00086">
    <property type="entry name" value="smpB"/>
    <property type="match status" value="1"/>
</dbReference>
<dbReference type="PANTHER" id="PTHR30308:SF2">
    <property type="entry name" value="SSRA-BINDING PROTEIN"/>
    <property type="match status" value="1"/>
</dbReference>
<dbReference type="PANTHER" id="PTHR30308">
    <property type="entry name" value="TMRNA-BINDING COMPONENT OF TRANS-TRANSLATION TAGGING COMPLEX"/>
    <property type="match status" value="1"/>
</dbReference>
<dbReference type="Pfam" id="PF01668">
    <property type="entry name" value="SmpB"/>
    <property type="match status" value="1"/>
</dbReference>
<dbReference type="SUPFAM" id="SSF74982">
    <property type="entry name" value="Small protein B (SmpB)"/>
    <property type="match status" value="1"/>
</dbReference>
<dbReference type="PROSITE" id="PS01317">
    <property type="entry name" value="SSRP"/>
    <property type="match status" value="1"/>
</dbReference>